<gene>
    <name type="ordered locus">SAG1645</name>
</gene>
<comment type="subcellular location">
    <subcellularLocation>
        <location evidence="1">Cytoplasm</location>
    </subcellularLocation>
</comment>
<comment type="similarity">
    <text evidence="1">Belongs to the TACO1 family. YeeN subfamily.</text>
</comment>
<feature type="chain" id="PRO_0000175900" description="Probable transcriptional regulatory protein SAG1645">
    <location>
        <begin position="1"/>
        <end position="238"/>
    </location>
</feature>
<organism>
    <name type="scientific">Streptococcus agalactiae serotype V (strain ATCC BAA-611 / 2603 V/R)</name>
    <dbReference type="NCBI Taxonomy" id="208435"/>
    <lineage>
        <taxon>Bacteria</taxon>
        <taxon>Bacillati</taxon>
        <taxon>Bacillota</taxon>
        <taxon>Bacilli</taxon>
        <taxon>Lactobacillales</taxon>
        <taxon>Streptococcaceae</taxon>
        <taxon>Streptococcus</taxon>
    </lineage>
</organism>
<dbReference type="EMBL" id="AE009948">
    <property type="protein sequence ID" value="AAN00509.1"/>
    <property type="molecule type" value="Genomic_DNA"/>
</dbReference>
<dbReference type="RefSeq" id="NP_688636.1">
    <property type="nucleotide sequence ID" value="NC_004116.1"/>
</dbReference>
<dbReference type="RefSeq" id="WP_000532903.1">
    <property type="nucleotide sequence ID" value="NC_004116.1"/>
</dbReference>
<dbReference type="SMR" id="P67185"/>
<dbReference type="STRING" id="208435.SAG1645"/>
<dbReference type="KEGG" id="sag:SAG1645"/>
<dbReference type="PATRIC" id="fig|208435.3.peg.1655"/>
<dbReference type="HOGENOM" id="CLU_062974_2_0_9"/>
<dbReference type="OrthoDB" id="9781053at2"/>
<dbReference type="Proteomes" id="UP000000821">
    <property type="component" value="Chromosome"/>
</dbReference>
<dbReference type="GO" id="GO:0005829">
    <property type="term" value="C:cytosol"/>
    <property type="evidence" value="ECO:0007669"/>
    <property type="project" value="TreeGrafter"/>
</dbReference>
<dbReference type="GO" id="GO:0003677">
    <property type="term" value="F:DNA binding"/>
    <property type="evidence" value="ECO:0007669"/>
    <property type="project" value="UniProtKB-UniRule"/>
</dbReference>
<dbReference type="GO" id="GO:0006355">
    <property type="term" value="P:regulation of DNA-templated transcription"/>
    <property type="evidence" value="ECO:0007669"/>
    <property type="project" value="UniProtKB-UniRule"/>
</dbReference>
<dbReference type="FunFam" id="1.10.10.200:FF:000003">
    <property type="entry name" value="Probable transcriptional regulatory protein YeeN"/>
    <property type="match status" value="1"/>
</dbReference>
<dbReference type="FunFam" id="3.30.70.980:FF:000004">
    <property type="entry name" value="Probable transcriptional regulatory protein YeeN"/>
    <property type="match status" value="1"/>
</dbReference>
<dbReference type="Gene3D" id="1.10.10.200">
    <property type="match status" value="1"/>
</dbReference>
<dbReference type="Gene3D" id="3.30.70.980">
    <property type="match status" value="2"/>
</dbReference>
<dbReference type="HAMAP" id="MF_00693">
    <property type="entry name" value="Transcrip_reg_TACO1"/>
    <property type="match status" value="1"/>
</dbReference>
<dbReference type="HAMAP" id="MF_00918">
    <property type="entry name" value="Transcrip_reg_TACO1_YeeN"/>
    <property type="match status" value="1"/>
</dbReference>
<dbReference type="InterPro" id="IPR017856">
    <property type="entry name" value="Integrase-like_N"/>
</dbReference>
<dbReference type="InterPro" id="IPR048300">
    <property type="entry name" value="TACO1_YebC-like_2nd/3rd_dom"/>
</dbReference>
<dbReference type="InterPro" id="IPR049083">
    <property type="entry name" value="TACO1_YebC_N"/>
</dbReference>
<dbReference type="InterPro" id="IPR002876">
    <property type="entry name" value="Transcrip_reg_TACO1-like"/>
</dbReference>
<dbReference type="InterPro" id="IPR026564">
    <property type="entry name" value="Transcrip_reg_TACO1-like_dom3"/>
</dbReference>
<dbReference type="InterPro" id="IPR026562">
    <property type="entry name" value="Transcrip_reg_TACO1_YeeN"/>
</dbReference>
<dbReference type="InterPro" id="IPR029072">
    <property type="entry name" value="YebC-like"/>
</dbReference>
<dbReference type="NCBIfam" id="NF001030">
    <property type="entry name" value="PRK00110.1"/>
    <property type="match status" value="1"/>
</dbReference>
<dbReference type="NCBIfam" id="NF009044">
    <property type="entry name" value="PRK12378.1"/>
    <property type="match status" value="1"/>
</dbReference>
<dbReference type="NCBIfam" id="TIGR01033">
    <property type="entry name" value="YebC/PmpR family DNA-binding transcriptional regulator"/>
    <property type="match status" value="1"/>
</dbReference>
<dbReference type="PANTHER" id="PTHR12532">
    <property type="entry name" value="TRANSLATIONAL ACTIVATOR OF CYTOCHROME C OXIDASE 1"/>
    <property type="match status" value="1"/>
</dbReference>
<dbReference type="PANTHER" id="PTHR12532:SF0">
    <property type="entry name" value="TRANSLATIONAL ACTIVATOR OF CYTOCHROME C OXIDASE 1"/>
    <property type="match status" value="1"/>
</dbReference>
<dbReference type="Pfam" id="PF20772">
    <property type="entry name" value="TACO1_YebC_N"/>
    <property type="match status" value="1"/>
</dbReference>
<dbReference type="Pfam" id="PF01709">
    <property type="entry name" value="Transcrip_reg"/>
    <property type="match status" value="1"/>
</dbReference>
<dbReference type="SUPFAM" id="SSF75625">
    <property type="entry name" value="YebC-like"/>
    <property type="match status" value="1"/>
</dbReference>
<proteinExistence type="inferred from homology"/>
<evidence type="ECO:0000255" key="1">
    <source>
        <dbReference type="HAMAP-Rule" id="MF_00918"/>
    </source>
</evidence>
<sequence length="238" mass="25875">MGRKWANIVAKKTAKDGANSKVYAKFGVEIYVAAKQGEPDPESNSALKFVLDRAKQAQVPKHVIDKAIDKAKGNTDETFVEGRYEGFGPNGSMIIVDTLTSNVNRTAANVRTAYGKNGGNMGASGSVSYLFDKKGVIVFAGDDADTVFEQLLEADVDVDDVEAEEGTITVYTAPTDLHKGIQALRDNGVEEFQVTELEMIPQSEVVLEGDDLETFEKLIDALESDDDVQKVYHNVADF</sequence>
<protein>
    <recommendedName>
        <fullName evidence="1">Probable transcriptional regulatory protein SAG1645</fullName>
    </recommendedName>
</protein>
<keyword id="KW-0963">Cytoplasm</keyword>
<keyword id="KW-0238">DNA-binding</keyword>
<keyword id="KW-1185">Reference proteome</keyword>
<keyword id="KW-0804">Transcription</keyword>
<keyword id="KW-0805">Transcription regulation</keyword>
<reference key="1">
    <citation type="journal article" date="2002" name="Proc. Natl. Acad. Sci. U.S.A.">
        <title>Complete genome sequence and comparative genomic analysis of an emerging human pathogen, serotype V Streptococcus agalactiae.</title>
        <authorList>
            <person name="Tettelin H."/>
            <person name="Masignani V."/>
            <person name="Cieslewicz M.J."/>
            <person name="Eisen J.A."/>
            <person name="Peterson S.N."/>
            <person name="Wessels M.R."/>
            <person name="Paulsen I.T."/>
            <person name="Nelson K.E."/>
            <person name="Margarit I."/>
            <person name="Read T.D."/>
            <person name="Madoff L.C."/>
            <person name="Wolf A.M."/>
            <person name="Beanan M.J."/>
            <person name="Brinkac L.M."/>
            <person name="Daugherty S.C."/>
            <person name="DeBoy R.T."/>
            <person name="Durkin A.S."/>
            <person name="Kolonay J.F."/>
            <person name="Madupu R."/>
            <person name="Lewis M.R."/>
            <person name="Radune D."/>
            <person name="Fedorova N.B."/>
            <person name="Scanlan D."/>
            <person name="Khouri H.M."/>
            <person name="Mulligan S."/>
            <person name="Carty H.A."/>
            <person name="Cline R.T."/>
            <person name="Van Aken S.E."/>
            <person name="Gill J."/>
            <person name="Scarselli M."/>
            <person name="Mora M."/>
            <person name="Iacobini E.T."/>
            <person name="Brettoni C."/>
            <person name="Galli G."/>
            <person name="Mariani M."/>
            <person name="Vegni F."/>
            <person name="Maione D."/>
            <person name="Rinaudo D."/>
            <person name="Rappuoli R."/>
            <person name="Telford J.L."/>
            <person name="Kasper D.L."/>
            <person name="Grandi G."/>
            <person name="Fraser C.M."/>
        </authorList>
    </citation>
    <scope>NUCLEOTIDE SEQUENCE [LARGE SCALE GENOMIC DNA]</scope>
    <source>
        <strain>ATCC BAA-611 / 2603 V/R</strain>
    </source>
</reference>
<name>Y1645_STRA5</name>
<accession>P67185</accession>
<accession>Q8DY48</accession>
<accession>Q8E3R5</accession>